<protein>
    <recommendedName>
        <fullName evidence="1">Potassium-transporting ATPase potassium-binding subunit</fullName>
    </recommendedName>
    <alternativeName>
        <fullName evidence="1">ATP phosphohydrolase [potassium-transporting] A chain</fullName>
    </alternativeName>
    <alternativeName>
        <fullName evidence="1">Potassium-binding and translocating subunit A</fullName>
    </alternativeName>
    <alternativeName>
        <fullName evidence="1">Potassium-translocating ATPase A chain</fullName>
    </alternativeName>
</protein>
<accession>A7I5F0</accession>
<name>KDPA_METB6</name>
<keyword id="KW-1003">Cell membrane</keyword>
<keyword id="KW-0406">Ion transport</keyword>
<keyword id="KW-0472">Membrane</keyword>
<keyword id="KW-0630">Potassium</keyword>
<keyword id="KW-0633">Potassium transport</keyword>
<keyword id="KW-1185">Reference proteome</keyword>
<keyword id="KW-0812">Transmembrane</keyword>
<keyword id="KW-1133">Transmembrane helix</keyword>
<keyword id="KW-0813">Transport</keyword>
<feature type="chain" id="PRO_1000114688" description="Potassium-transporting ATPase potassium-binding subunit">
    <location>
        <begin position="1"/>
        <end position="584"/>
    </location>
</feature>
<feature type="transmembrane region" description="Helical" evidence="1">
    <location>
        <begin position="8"/>
        <end position="28"/>
    </location>
</feature>
<feature type="transmembrane region" description="Helical" evidence="1">
    <location>
        <begin position="65"/>
        <end position="85"/>
    </location>
</feature>
<feature type="transmembrane region" description="Helical" evidence="1">
    <location>
        <begin position="139"/>
        <end position="159"/>
    </location>
</feature>
<feature type="transmembrane region" description="Helical" evidence="1">
    <location>
        <begin position="172"/>
        <end position="192"/>
    </location>
</feature>
<feature type="transmembrane region" description="Helical" evidence="1">
    <location>
        <begin position="262"/>
        <end position="282"/>
    </location>
</feature>
<feature type="transmembrane region" description="Helical" evidence="1">
    <location>
        <begin position="292"/>
        <end position="312"/>
    </location>
</feature>
<feature type="transmembrane region" description="Helical" evidence="1">
    <location>
        <begin position="398"/>
        <end position="418"/>
    </location>
</feature>
<feature type="transmembrane region" description="Helical" evidence="1">
    <location>
        <begin position="440"/>
        <end position="460"/>
    </location>
</feature>
<feature type="transmembrane region" description="Helical" evidence="1">
    <location>
        <begin position="507"/>
        <end position="527"/>
    </location>
</feature>
<feature type="transmembrane region" description="Helical" evidence="1">
    <location>
        <begin position="544"/>
        <end position="564"/>
    </location>
</feature>
<sequence length="584" mass="62526">MSVNDWAFLVLIGVILALLLIPTGEFMFRVYTGKKTFLSPLFVPVEAWILKACGAGSDEEMDWKSFAVAMMIFSVIGIVFVFILQEVQQFLPLNPLGATAVPWDLSLNTAVSFATNTNWQFYVPETTVSYLTQMIGLTVQNFMSAAVGMVVLVAFIYGFSRRSSHTIGNFWVLLLRSIWILLPLSFVIALVLVSQGAPQTLSGPVTVPLLNATNDSGGNIITTQLISLGPAASQIAVKMLGTNGGGFFNANSAHPFENPTWFTDLVEIVAILLIPVSLCFMFGKMIGSVKKGIAILIAMMILFVPLLGLGIWSEIGGNPAFTPLGISQAPSHLQSGGNMEGKEVRFGPVQSAAFSVITTVTSCGAVNSMHDSFMPLGGLVQIFDIQLGEIVFGGVGSGLYCMLVFVIIAMFIAGLMVGRTPELYGKKIEPYEMKLSTIHILIPIFLILIGTAIAVSITAGTSMTANPGPHGFSEILYAFSSVSQNNGSAFAGLSSDTFYNLTTAFCMFVGRYAIAIITLALAGAFVAKKIVPPGEGTLQDHRPLFIIWVVFTILIIGALSFLPALSLGPVVEFLIQMGRGVIHV</sequence>
<dbReference type="EMBL" id="CP000780">
    <property type="protein sequence ID" value="ABS54961.1"/>
    <property type="molecule type" value="Genomic_DNA"/>
</dbReference>
<dbReference type="SMR" id="A7I5F0"/>
<dbReference type="STRING" id="456442.Mboo_0443"/>
<dbReference type="KEGG" id="mbn:Mboo_0443"/>
<dbReference type="eggNOG" id="arCOG04804">
    <property type="taxonomic scope" value="Archaea"/>
</dbReference>
<dbReference type="HOGENOM" id="CLU_018614_3_0_2"/>
<dbReference type="Proteomes" id="UP000002408">
    <property type="component" value="Chromosome"/>
</dbReference>
<dbReference type="GO" id="GO:0005886">
    <property type="term" value="C:plasma membrane"/>
    <property type="evidence" value="ECO:0007669"/>
    <property type="project" value="UniProtKB-SubCell"/>
</dbReference>
<dbReference type="GO" id="GO:0008556">
    <property type="term" value="F:P-type potassium transmembrane transporter activity"/>
    <property type="evidence" value="ECO:0007669"/>
    <property type="project" value="InterPro"/>
</dbReference>
<dbReference type="GO" id="GO:0030955">
    <property type="term" value="F:potassium ion binding"/>
    <property type="evidence" value="ECO:0007669"/>
    <property type="project" value="UniProtKB-UniRule"/>
</dbReference>
<dbReference type="HAMAP" id="MF_00275">
    <property type="entry name" value="KdpA"/>
    <property type="match status" value="1"/>
</dbReference>
<dbReference type="InterPro" id="IPR004623">
    <property type="entry name" value="KdpA"/>
</dbReference>
<dbReference type="NCBIfam" id="TIGR00680">
    <property type="entry name" value="kdpA"/>
    <property type="match status" value="1"/>
</dbReference>
<dbReference type="PANTHER" id="PTHR30607">
    <property type="entry name" value="POTASSIUM-TRANSPORTING ATPASE A CHAIN"/>
    <property type="match status" value="1"/>
</dbReference>
<dbReference type="PANTHER" id="PTHR30607:SF2">
    <property type="entry name" value="POTASSIUM-TRANSPORTING ATPASE POTASSIUM-BINDING SUBUNIT"/>
    <property type="match status" value="1"/>
</dbReference>
<dbReference type="Pfam" id="PF03814">
    <property type="entry name" value="KdpA"/>
    <property type="match status" value="1"/>
</dbReference>
<dbReference type="PIRSF" id="PIRSF001294">
    <property type="entry name" value="K_ATPaseA"/>
    <property type="match status" value="1"/>
</dbReference>
<organism>
    <name type="scientific">Methanoregula boonei (strain DSM 21154 / JCM 14090 / 6A8)</name>
    <dbReference type="NCBI Taxonomy" id="456442"/>
    <lineage>
        <taxon>Archaea</taxon>
        <taxon>Methanobacteriati</taxon>
        <taxon>Methanobacteriota</taxon>
        <taxon>Stenosarchaea group</taxon>
        <taxon>Methanomicrobia</taxon>
        <taxon>Methanomicrobiales</taxon>
        <taxon>Methanoregulaceae</taxon>
        <taxon>Methanoregula</taxon>
    </lineage>
</organism>
<proteinExistence type="inferred from homology"/>
<reference key="1">
    <citation type="journal article" date="2015" name="Microbiology">
        <title>Genome of Methanoregula boonei 6A8 reveals adaptations to oligotrophic peatland environments.</title>
        <authorList>
            <person name="Braeuer S."/>
            <person name="Cadillo-Quiroz H."/>
            <person name="Kyrpides N."/>
            <person name="Woyke T."/>
            <person name="Goodwin L."/>
            <person name="Detter C."/>
            <person name="Podell S."/>
            <person name="Yavitt J.B."/>
            <person name="Zinder S.H."/>
        </authorList>
    </citation>
    <scope>NUCLEOTIDE SEQUENCE [LARGE SCALE GENOMIC DNA]</scope>
    <source>
        <strain>DSM 21154 / JCM 14090 / 6A8</strain>
    </source>
</reference>
<comment type="function">
    <text evidence="1">Part of the high-affinity ATP-driven potassium transport (or Kdp) system, which catalyzes the hydrolysis of ATP coupled with the electrogenic transport of potassium into the cytoplasm. This subunit binds the extracellular potassium ions and delivers the ions to the membrane domain of KdpB through an intramembrane tunnel.</text>
</comment>
<comment type="subunit">
    <text evidence="1">The system is composed of three essential subunits: KdpA, KdpB and KdpC.</text>
</comment>
<comment type="subcellular location">
    <subcellularLocation>
        <location evidence="1">Cell membrane</location>
        <topology evidence="1">Multi-pass membrane protein</topology>
    </subcellularLocation>
</comment>
<comment type="similarity">
    <text evidence="1">Belongs to the KdpA family.</text>
</comment>
<gene>
    <name evidence="1" type="primary">kdpA</name>
    <name type="ordered locus">Mboo_0443</name>
</gene>
<evidence type="ECO:0000255" key="1">
    <source>
        <dbReference type="HAMAP-Rule" id="MF_00275"/>
    </source>
</evidence>